<name>Y3439_MYCTA</name>
<comment type="function">
    <text evidence="1">Exhibits S-adenosyl-L-methionine-dependent methyltransferase activity.</text>
</comment>
<comment type="similarity">
    <text evidence="2">Belongs to the UPF0677 family.</text>
</comment>
<sequence length="348" mass="38140">MARPMGKLPSNTRKCAQCAMAEALLEIAGQTINQKDLGRSGRMTRTDNDTWDLASSVGATATMIATARALASRAENPLINDPFAEPLVRAVGIDLFTRLASGELRLEDIGDHATGGRWMIDNIAIRTKFYDDFFGDATTAGIRQVVILAAGLDTRAYRLPWPPGTVVYEIDQPAVIKFKTRALANLNAEPNAERHAVAVDLRNDWPTALKNAGFDPARPTAFSAEGLLSYLPPQGQDRLLDAITALSAPDSRLATQSPLVLDLAEEDEKKMRMKSAAEAWRERGFDLDLTELIYFDQRNDVADYLAGSGWQVTTSTGKELFAAQGLPPFADDHITRFADRRYISAVLK</sequence>
<evidence type="ECO:0000250" key="1">
    <source>
        <dbReference type="UniProtKB" id="Q9CCZ4"/>
    </source>
</evidence>
<evidence type="ECO:0000305" key="2"/>
<feature type="chain" id="PRO_0000361227" description="Putative S-adenosyl-L-methionine-dependent methyltransferase MRA_3439">
    <location>
        <begin position="1"/>
        <end position="348"/>
    </location>
</feature>
<feature type="binding site" evidence="1">
    <location>
        <position position="171"/>
    </location>
    <ligand>
        <name>S-adenosyl-L-methionine</name>
        <dbReference type="ChEBI" id="CHEBI:59789"/>
    </ligand>
</feature>
<feature type="binding site" evidence="1">
    <location>
        <begin position="200"/>
        <end position="201"/>
    </location>
    <ligand>
        <name>S-adenosyl-L-methionine</name>
        <dbReference type="ChEBI" id="CHEBI:59789"/>
    </ligand>
</feature>
<keyword id="KW-0489">Methyltransferase</keyword>
<keyword id="KW-1185">Reference proteome</keyword>
<keyword id="KW-0949">S-adenosyl-L-methionine</keyword>
<keyword id="KW-0808">Transferase</keyword>
<protein>
    <recommendedName>
        <fullName>Putative S-adenosyl-L-methionine-dependent methyltransferase MRA_3439</fullName>
        <ecNumber>2.1.1.-</ecNumber>
    </recommendedName>
</protein>
<organism>
    <name type="scientific">Mycobacterium tuberculosis (strain ATCC 25177 / H37Ra)</name>
    <dbReference type="NCBI Taxonomy" id="419947"/>
    <lineage>
        <taxon>Bacteria</taxon>
        <taxon>Bacillati</taxon>
        <taxon>Actinomycetota</taxon>
        <taxon>Actinomycetes</taxon>
        <taxon>Mycobacteriales</taxon>
        <taxon>Mycobacteriaceae</taxon>
        <taxon>Mycobacterium</taxon>
        <taxon>Mycobacterium tuberculosis complex</taxon>
    </lineage>
</organism>
<reference key="1">
    <citation type="journal article" date="2008" name="PLoS ONE">
        <title>Genetic basis of virulence attenuation revealed by comparative genomic analysis of Mycobacterium tuberculosis strain H37Ra versus H37Rv.</title>
        <authorList>
            <person name="Zheng H."/>
            <person name="Lu L."/>
            <person name="Wang B."/>
            <person name="Pu S."/>
            <person name="Zhang X."/>
            <person name="Zhu G."/>
            <person name="Shi W."/>
            <person name="Zhang L."/>
            <person name="Wang H."/>
            <person name="Wang S."/>
            <person name="Zhao G."/>
            <person name="Zhang Y."/>
        </authorList>
    </citation>
    <scope>NUCLEOTIDE SEQUENCE [LARGE SCALE GENOMIC DNA]</scope>
    <source>
        <strain>ATCC 25177 / H37Ra</strain>
    </source>
</reference>
<accession>A5U874</accession>
<gene>
    <name type="ordered locus">MRA_3439</name>
</gene>
<dbReference type="EC" id="2.1.1.-"/>
<dbReference type="EMBL" id="CP000611">
    <property type="protein sequence ID" value="ABQ75224.1"/>
    <property type="molecule type" value="Genomic_DNA"/>
</dbReference>
<dbReference type="SMR" id="A5U874"/>
<dbReference type="KEGG" id="mra:MRA_3439"/>
<dbReference type="eggNOG" id="COG3315">
    <property type="taxonomic scope" value="Bacteria"/>
</dbReference>
<dbReference type="HOGENOM" id="CLU_056160_2_1_11"/>
<dbReference type="Proteomes" id="UP000001988">
    <property type="component" value="Chromosome"/>
</dbReference>
<dbReference type="GO" id="GO:0008168">
    <property type="term" value="F:methyltransferase activity"/>
    <property type="evidence" value="ECO:0007669"/>
    <property type="project" value="UniProtKB-KW"/>
</dbReference>
<dbReference type="GO" id="GO:0032259">
    <property type="term" value="P:methylation"/>
    <property type="evidence" value="ECO:0007669"/>
    <property type="project" value="UniProtKB-KW"/>
</dbReference>
<dbReference type="FunFam" id="3.40.50.150:FF:000152">
    <property type="entry name" value="S-adenosyl-L-methionine-dependent methyltransferase"/>
    <property type="match status" value="1"/>
</dbReference>
<dbReference type="Gene3D" id="3.40.50.150">
    <property type="entry name" value="Vaccinia Virus protein VP39"/>
    <property type="match status" value="1"/>
</dbReference>
<dbReference type="InterPro" id="IPR007213">
    <property type="entry name" value="Ppm1/Ppm2/Tcmp"/>
</dbReference>
<dbReference type="InterPro" id="IPR029063">
    <property type="entry name" value="SAM-dependent_MTases_sf"/>
</dbReference>
<dbReference type="InterPro" id="IPR011610">
    <property type="entry name" value="SAM_mthyl_Trfase_ML2640-like"/>
</dbReference>
<dbReference type="NCBIfam" id="TIGR00027">
    <property type="entry name" value="mthyl_TIGR00027"/>
    <property type="match status" value="1"/>
</dbReference>
<dbReference type="PANTHER" id="PTHR43619">
    <property type="entry name" value="S-ADENOSYL-L-METHIONINE-DEPENDENT METHYLTRANSFERASE YKTD-RELATED"/>
    <property type="match status" value="1"/>
</dbReference>
<dbReference type="PANTHER" id="PTHR43619:SF2">
    <property type="entry name" value="S-ADENOSYL-L-METHIONINE-DEPENDENT METHYLTRANSFERASES SUPERFAMILY PROTEIN"/>
    <property type="match status" value="1"/>
</dbReference>
<dbReference type="Pfam" id="PF04072">
    <property type="entry name" value="LCM"/>
    <property type="match status" value="1"/>
</dbReference>
<dbReference type="SUPFAM" id="SSF53335">
    <property type="entry name" value="S-adenosyl-L-methionine-dependent methyltransferases"/>
    <property type="match status" value="1"/>
</dbReference>
<proteinExistence type="inferred from homology"/>